<gene>
    <name evidence="2" type="primary">deoD</name>
    <name type="ordered locus">SPA4384</name>
</gene>
<accession>Q5PK20</accession>
<proteinExistence type="inferred from homology"/>
<reference key="1">
    <citation type="journal article" date="2004" name="Nat. Genet.">
        <title>Comparison of genome degradation in Paratyphi A and Typhi, human-restricted serovars of Salmonella enterica that cause typhoid.</title>
        <authorList>
            <person name="McClelland M."/>
            <person name="Sanderson K.E."/>
            <person name="Clifton S.W."/>
            <person name="Latreille P."/>
            <person name="Porwollik S."/>
            <person name="Sabo A."/>
            <person name="Meyer R."/>
            <person name="Bieri T."/>
            <person name="Ozersky P."/>
            <person name="McLellan M."/>
            <person name="Harkins C.R."/>
            <person name="Wang C."/>
            <person name="Nguyen C."/>
            <person name="Berghoff A."/>
            <person name="Elliott G."/>
            <person name="Kohlberg S."/>
            <person name="Strong C."/>
            <person name="Du F."/>
            <person name="Carter J."/>
            <person name="Kremizki C."/>
            <person name="Layman D."/>
            <person name="Leonard S."/>
            <person name="Sun H."/>
            <person name="Fulton L."/>
            <person name="Nash W."/>
            <person name="Miner T."/>
            <person name="Minx P."/>
            <person name="Delehaunty K."/>
            <person name="Fronick C."/>
            <person name="Magrini V."/>
            <person name="Nhan M."/>
            <person name="Warren W."/>
            <person name="Florea L."/>
            <person name="Spieth J."/>
            <person name="Wilson R.K."/>
        </authorList>
    </citation>
    <scope>NUCLEOTIDE SEQUENCE [LARGE SCALE GENOMIC DNA]</scope>
    <source>
        <strain>ATCC 9150 / SARB42</strain>
    </source>
</reference>
<feature type="chain" id="PRO_0000063156" description="Purine nucleoside phosphorylase DeoD-type">
    <location>
        <begin position="1"/>
        <end position="239"/>
    </location>
</feature>
<feature type="active site" description="Proton donor" evidence="2">
    <location>
        <position position="205"/>
    </location>
</feature>
<feature type="binding site" evidence="1">
    <location>
        <position position="5"/>
    </location>
    <ligand>
        <name>a purine D-ribonucleoside</name>
        <dbReference type="ChEBI" id="CHEBI:142355"/>
        <note>ligand shared between dimeric partners</note>
    </ligand>
</feature>
<feature type="binding site" description="in other chain" evidence="1">
    <location>
        <position position="21"/>
    </location>
    <ligand>
        <name>phosphate</name>
        <dbReference type="ChEBI" id="CHEBI:43474"/>
        <note>ligand shared between dimeric partners</note>
    </ligand>
</feature>
<feature type="binding site" description="in other chain" evidence="1">
    <location>
        <position position="25"/>
    </location>
    <ligand>
        <name>phosphate</name>
        <dbReference type="ChEBI" id="CHEBI:43474"/>
        <note>ligand shared between dimeric partners</note>
    </ligand>
</feature>
<feature type="binding site" evidence="1">
    <location>
        <position position="44"/>
    </location>
    <ligand>
        <name>phosphate</name>
        <dbReference type="ChEBI" id="CHEBI:43474"/>
        <note>ligand shared between dimeric partners</note>
    </ligand>
</feature>
<feature type="binding site" description="in other chain" evidence="1">
    <location>
        <begin position="88"/>
        <end position="91"/>
    </location>
    <ligand>
        <name>phosphate</name>
        <dbReference type="ChEBI" id="CHEBI:43474"/>
        <note>ligand shared between dimeric partners</note>
    </ligand>
</feature>
<feature type="binding site" description="in other chain" evidence="1">
    <location>
        <begin position="180"/>
        <end position="182"/>
    </location>
    <ligand>
        <name>a purine D-ribonucleoside</name>
        <dbReference type="ChEBI" id="CHEBI:142355"/>
        <note>ligand shared between dimeric partners</note>
    </ligand>
</feature>
<feature type="binding site" description="in other chain" evidence="1">
    <location>
        <begin position="204"/>
        <end position="205"/>
    </location>
    <ligand>
        <name>a purine D-ribonucleoside</name>
        <dbReference type="ChEBI" id="CHEBI:142355"/>
        <note>ligand shared between dimeric partners</note>
    </ligand>
</feature>
<feature type="site" description="Important for catalytic activity" evidence="2">
    <location>
        <position position="218"/>
    </location>
</feature>
<sequence length="239" mass="25979">MATPHINAEMGDFADVVLMPGDPLRAKHIAETFLEDVREVNNVRGMLGFTGTYKGRKISVMGHGMGIPSCSIYTKELITDFGVKKIIRVGSCGAVRMDVKLRDVVIGMGACTDSKVNRIRFKDHDFAAIADFDMVRNAVDAAKALGVDARVGNLFSADLFYSPDGEMFDVMEKYGVLGVEMEAAGIYGVAAEFGAKALTICTVSDHIRTHEQTTAAERQTTFNDMIKIALESVLLGDKE</sequence>
<keyword id="KW-0328">Glycosyltransferase</keyword>
<keyword id="KW-0808">Transferase</keyword>
<name>DEOD_SALPA</name>
<organism>
    <name type="scientific">Salmonella paratyphi A (strain ATCC 9150 / SARB42)</name>
    <dbReference type="NCBI Taxonomy" id="295319"/>
    <lineage>
        <taxon>Bacteria</taxon>
        <taxon>Pseudomonadati</taxon>
        <taxon>Pseudomonadota</taxon>
        <taxon>Gammaproteobacteria</taxon>
        <taxon>Enterobacterales</taxon>
        <taxon>Enterobacteriaceae</taxon>
        <taxon>Salmonella</taxon>
    </lineage>
</organism>
<dbReference type="EC" id="2.4.2.1" evidence="2"/>
<dbReference type="EMBL" id="CP000026">
    <property type="protein sequence ID" value="AAV80107.1"/>
    <property type="molecule type" value="Genomic_DNA"/>
</dbReference>
<dbReference type="RefSeq" id="WP_000224864.1">
    <property type="nucleotide sequence ID" value="NC_006511.1"/>
</dbReference>
<dbReference type="SMR" id="Q5PK20"/>
<dbReference type="GeneID" id="89550598"/>
<dbReference type="KEGG" id="spt:SPA4384"/>
<dbReference type="HOGENOM" id="CLU_068457_2_0_6"/>
<dbReference type="Proteomes" id="UP000008185">
    <property type="component" value="Chromosome"/>
</dbReference>
<dbReference type="GO" id="GO:0005829">
    <property type="term" value="C:cytosol"/>
    <property type="evidence" value="ECO:0007669"/>
    <property type="project" value="TreeGrafter"/>
</dbReference>
<dbReference type="GO" id="GO:0004731">
    <property type="term" value="F:purine-nucleoside phosphorylase activity"/>
    <property type="evidence" value="ECO:0007669"/>
    <property type="project" value="UniProtKB-UniRule"/>
</dbReference>
<dbReference type="GO" id="GO:0006152">
    <property type="term" value="P:purine nucleoside catabolic process"/>
    <property type="evidence" value="ECO:0007669"/>
    <property type="project" value="TreeGrafter"/>
</dbReference>
<dbReference type="CDD" id="cd09006">
    <property type="entry name" value="PNP_EcPNPI-like"/>
    <property type="match status" value="1"/>
</dbReference>
<dbReference type="FunFam" id="3.40.50.1580:FF:000002">
    <property type="entry name" value="Purine nucleoside phosphorylase DeoD-type"/>
    <property type="match status" value="1"/>
</dbReference>
<dbReference type="Gene3D" id="3.40.50.1580">
    <property type="entry name" value="Nucleoside phosphorylase domain"/>
    <property type="match status" value="1"/>
</dbReference>
<dbReference type="HAMAP" id="MF_01627">
    <property type="entry name" value="Pur_nucleosid_phosp"/>
    <property type="match status" value="1"/>
</dbReference>
<dbReference type="InterPro" id="IPR004402">
    <property type="entry name" value="DeoD-type"/>
</dbReference>
<dbReference type="InterPro" id="IPR018016">
    <property type="entry name" value="Nucleoside_phosphorylase_CS"/>
</dbReference>
<dbReference type="InterPro" id="IPR000845">
    <property type="entry name" value="Nucleoside_phosphorylase_d"/>
</dbReference>
<dbReference type="InterPro" id="IPR035994">
    <property type="entry name" value="Nucleoside_phosphorylase_sf"/>
</dbReference>
<dbReference type="NCBIfam" id="TIGR00107">
    <property type="entry name" value="deoD"/>
    <property type="match status" value="1"/>
</dbReference>
<dbReference type="NCBIfam" id="NF004489">
    <property type="entry name" value="PRK05819.1"/>
    <property type="match status" value="1"/>
</dbReference>
<dbReference type="NCBIfam" id="NF009914">
    <property type="entry name" value="PRK13374.1"/>
    <property type="match status" value="1"/>
</dbReference>
<dbReference type="PANTHER" id="PTHR43691:SF2">
    <property type="entry name" value="PURINE NUCLEOSIDE PHOSPHORYLASE DEOD-TYPE"/>
    <property type="match status" value="1"/>
</dbReference>
<dbReference type="PANTHER" id="PTHR43691">
    <property type="entry name" value="URIDINE PHOSPHORYLASE"/>
    <property type="match status" value="1"/>
</dbReference>
<dbReference type="Pfam" id="PF01048">
    <property type="entry name" value="PNP_UDP_1"/>
    <property type="match status" value="1"/>
</dbReference>
<dbReference type="SUPFAM" id="SSF53167">
    <property type="entry name" value="Purine and uridine phosphorylases"/>
    <property type="match status" value="1"/>
</dbReference>
<dbReference type="PROSITE" id="PS01232">
    <property type="entry name" value="PNP_UDP_1"/>
    <property type="match status" value="1"/>
</dbReference>
<protein>
    <recommendedName>
        <fullName evidence="2">Purine nucleoside phosphorylase DeoD-type</fullName>
        <shortName evidence="2">PNP</shortName>
        <ecNumber evidence="2">2.4.2.1</ecNumber>
    </recommendedName>
</protein>
<evidence type="ECO:0000250" key="1">
    <source>
        <dbReference type="UniProtKB" id="P50389"/>
    </source>
</evidence>
<evidence type="ECO:0000255" key="2">
    <source>
        <dbReference type="HAMAP-Rule" id="MF_01627"/>
    </source>
</evidence>
<comment type="function">
    <text evidence="2">Catalyzes the reversible phosphorolytic breakdown of the N-glycosidic bond in the beta-(deoxy)ribonucleoside molecules, with the formation of the corresponding free purine bases and pentose-1-phosphate.</text>
</comment>
<comment type="catalytic activity">
    <reaction evidence="2">
        <text>a purine D-ribonucleoside + phosphate = a purine nucleobase + alpha-D-ribose 1-phosphate</text>
        <dbReference type="Rhea" id="RHEA:19805"/>
        <dbReference type="ChEBI" id="CHEBI:26386"/>
        <dbReference type="ChEBI" id="CHEBI:43474"/>
        <dbReference type="ChEBI" id="CHEBI:57720"/>
        <dbReference type="ChEBI" id="CHEBI:142355"/>
        <dbReference type="EC" id="2.4.2.1"/>
    </reaction>
</comment>
<comment type="catalytic activity">
    <reaction evidence="2">
        <text>a purine 2'-deoxy-D-ribonucleoside + phosphate = a purine nucleobase + 2-deoxy-alpha-D-ribose 1-phosphate</text>
        <dbReference type="Rhea" id="RHEA:36431"/>
        <dbReference type="ChEBI" id="CHEBI:26386"/>
        <dbReference type="ChEBI" id="CHEBI:43474"/>
        <dbReference type="ChEBI" id="CHEBI:57259"/>
        <dbReference type="ChEBI" id="CHEBI:142361"/>
        <dbReference type="EC" id="2.4.2.1"/>
    </reaction>
</comment>
<comment type="subunit">
    <text evidence="2">Homohexamer; trimer of homodimers.</text>
</comment>
<comment type="similarity">
    <text evidence="2">Belongs to the PNP/UDP phosphorylase family.</text>
</comment>